<sequence>MATKNEEILRKPDWLKIKLNTNENYTGLKKMMREKNLNTVCEEAKCPNIHECWGARRTATFMILGAVCTRACRFCAVKTGLPNELDLNEPERVAESVELMNLKHVVITAVARDDLRDAGSNVYAETVRKVRERNPFTTIEILPSDMGGDYDALETLMASRPDILNHNIETVRRLTPRVRARATYDRTLEFLRRSKELQPDIPTKSSIMVGLGETIEEIYETMDDLRANDVDILTIGQYLQPSRKHLKVQKYYTPLEFGKLRKVAMDKGFKHCQAGPLVRSSYHADEQVNEAAKEKQRQGEAQLNS</sequence>
<gene>
    <name evidence="1" type="primary">lipA</name>
    <name type="ordered locus">SaurJH9_0923</name>
</gene>
<name>LIPA_STAA9</name>
<protein>
    <recommendedName>
        <fullName evidence="1">Lipoyl synthase</fullName>
        <ecNumber evidence="1">2.8.1.8</ecNumber>
    </recommendedName>
    <alternativeName>
        <fullName evidence="1">Lip-syn</fullName>
        <shortName evidence="1">LS</shortName>
    </alternativeName>
    <alternativeName>
        <fullName evidence="1">Lipoate synthase</fullName>
    </alternativeName>
    <alternativeName>
        <fullName evidence="1">Lipoic acid synthase</fullName>
    </alternativeName>
    <alternativeName>
        <fullName evidence="1">Sulfur insertion protein LipA</fullName>
    </alternativeName>
</protein>
<organism>
    <name type="scientific">Staphylococcus aureus (strain JH9)</name>
    <dbReference type="NCBI Taxonomy" id="359786"/>
    <lineage>
        <taxon>Bacteria</taxon>
        <taxon>Bacillati</taxon>
        <taxon>Bacillota</taxon>
        <taxon>Bacilli</taxon>
        <taxon>Bacillales</taxon>
        <taxon>Staphylococcaceae</taxon>
        <taxon>Staphylococcus</taxon>
    </lineage>
</organism>
<reference key="1">
    <citation type="submission" date="2007-05" db="EMBL/GenBank/DDBJ databases">
        <title>Complete sequence of chromosome of Staphylococcus aureus subsp. aureus JH9.</title>
        <authorList>
            <consortium name="US DOE Joint Genome Institute"/>
            <person name="Copeland A."/>
            <person name="Lucas S."/>
            <person name="Lapidus A."/>
            <person name="Barry K."/>
            <person name="Detter J.C."/>
            <person name="Glavina del Rio T."/>
            <person name="Hammon N."/>
            <person name="Israni S."/>
            <person name="Pitluck S."/>
            <person name="Chain P."/>
            <person name="Malfatti S."/>
            <person name="Shin M."/>
            <person name="Vergez L."/>
            <person name="Schmutz J."/>
            <person name="Larimer F."/>
            <person name="Land M."/>
            <person name="Hauser L."/>
            <person name="Kyrpides N."/>
            <person name="Kim E."/>
            <person name="Tomasz A."/>
            <person name="Richardson P."/>
        </authorList>
    </citation>
    <scope>NUCLEOTIDE SEQUENCE [LARGE SCALE GENOMIC DNA]</scope>
    <source>
        <strain>JH9</strain>
    </source>
</reference>
<proteinExistence type="inferred from homology"/>
<keyword id="KW-0004">4Fe-4S</keyword>
<keyword id="KW-0963">Cytoplasm</keyword>
<keyword id="KW-0408">Iron</keyword>
<keyword id="KW-0411">Iron-sulfur</keyword>
<keyword id="KW-0479">Metal-binding</keyword>
<keyword id="KW-0949">S-adenosyl-L-methionine</keyword>
<keyword id="KW-0808">Transferase</keyword>
<evidence type="ECO:0000255" key="1">
    <source>
        <dbReference type="HAMAP-Rule" id="MF_00206"/>
    </source>
</evidence>
<evidence type="ECO:0000255" key="2">
    <source>
        <dbReference type="PROSITE-ProRule" id="PRU01266"/>
    </source>
</evidence>
<evidence type="ECO:0000256" key="3">
    <source>
        <dbReference type="SAM" id="MobiDB-lite"/>
    </source>
</evidence>
<feature type="chain" id="PRO_1000077973" description="Lipoyl synthase">
    <location>
        <begin position="1"/>
        <end position="305"/>
    </location>
</feature>
<feature type="domain" description="Radical SAM core" evidence="2">
    <location>
        <begin position="54"/>
        <end position="270"/>
    </location>
</feature>
<feature type="region of interest" description="Disordered" evidence="3">
    <location>
        <begin position="283"/>
        <end position="305"/>
    </location>
</feature>
<feature type="compositionally biased region" description="Basic and acidic residues" evidence="3">
    <location>
        <begin position="283"/>
        <end position="298"/>
    </location>
</feature>
<feature type="binding site" evidence="1">
    <location>
        <position position="41"/>
    </location>
    <ligand>
        <name>[4Fe-4S] cluster</name>
        <dbReference type="ChEBI" id="CHEBI:49883"/>
        <label>1</label>
    </ligand>
</feature>
<feature type="binding site" evidence="1">
    <location>
        <position position="46"/>
    </location>
    <ligand>
        <name>[4Fe-4S] cluster</name>
        <dbReference type="ChEBI" id="CHEBI:49883"/>
        <label>1</label>
    </ligand>
</feature>
<feature type="binding site" evidence="1">
    <location>
        <position position="52"/>
    </location>
    <ligand>
        <name>[4Fe-4S] cluster</name>
        <dbReference type="ChEBI" id="CHEBI:49883"/>
        <label>1</label>
    </ligand>
</feature>
<feature type="binding site" evidence="1">
    <location>
        <position position="68"/>
    </location>
    <ligand>
        <name>[4Fe-4S] cluster</name>
        <dbReference type="ChEBI" id="CHEBI:49883"/>
        <label>2</label>
        <note>4Fe-4S-S-AdoMet</note>
    </ligand>
</feature>
<feature type="binding site" evidence="1">
    <location>
        <position position="72"/>
    </location>
    <ligand>
        <name>[4Fe-4S] cluster</name>
        <dbReference type="ChEBI" id="CHEBI:49883"/>
        <label>2</label>
        <note>4Fe-4S-S-AdoMet</note>
    </ligand>
</feature>
<feature type="binding site" evidence="1">
    <location>
        <position position="75"/>
    </location>
    <ligand>
        <name>[4Fe-4S] cluster</name>
        <dbReference type="ChEBI" id="CHEBI:49883"/>
        <label>2</label>
        <note>4Fe-4S-S-AdoMet</note>
    </ligand>
</feature>
<feature type="binding site" evidence="1">
    <location>
        <position position="281"/>
    </location>
    <ligand>
        <name>[4Fe-4S] cluster</name>
        <dbReference type="ChEBI" id="CHEBI:49883"/>
        <label>1</label>
    </ligand>
</feature>
<dbReference type="EC" id="2.8.1.8" evidence="1"/>
<dbReference type="EMBL" id="CP000703">
    <property type="protein sequence ID" value="ABQ48724.1"/>
    <property type="molecule type" value="Genomic_DNA"/>
</dbReference>
<dbReference type="RefSeq" id="WP_000201875.1">
    <property type="nucleotide sequence ID" value="NC_009487.1"/>
</dbReference>
<dbReference type="SMR" id="A5IRA1"/>
<dbReference type="GeneID" id="98345243"/>
<dbReference type="KEGG" id="saj:SaurJH9_0923"/>
<dbReference type="HOGENOM" id="CLU_033144_2_1_9"/>
<dbReference type="GO" id="GO:0005737">
    <property type="term" value="C:cytoplasm"/>
    <property type="evidence" value="ECO:0007669"/>
    <property type="project" value="UniProtKB-SubCell"/>
</dbReference>
<dbReference type="GO" id="GO:0051539">
    <property type="term" value="F:4 iron, 4 sulfur cluster binding"/>
    <property type="evidence" value="ECO:0007669"/>
    <property type="project" value="UniProtKB-UniRule"/>
</dbReference>
<dbReference type="GO" id="GO:0016992">
    <property type="term" value="F:lipoate synthase activity"/>
    <property type="evidence" value="ECO:0007669"/>
    <property type="project" value="UniProtKB-UniRule"/>
</dbReference>
<dbReference type="GO" id="GO:0046872">
    <property type="term" value="F:metal ion binding"/>
    <property type="evidence" value="ECO:0007669"/>
    <property type="project" value="UniProtKB-KW"/>
</dbReference>
<dbReference type="CDD" id="cd01335">
    <property type="entry name" value="Radical_SAM"/>
    <property type="match status" value="1"/>
</dbReference>
<dbReference type="FunFam" id="3.20.20.70:FF:000040">
    <property type="entry name" value="Lipoyl synthase"/>
    <property type="match status" value="1"/>
</dbReference>
<dbReference type="Gene3D" id="3.20.20.70">
    <property type="entry name" value="Aldolase class I"/>
    <property type="match status" value="1"/>
</dbReference>
<dbReference type="HAMAP" id="MF_00206">
    <property type="entry name" value="Lipoyl_synth"/>
    <property type="match status" value="1"/>
</dbReference>
<dbReference type="InterPro" id="IPR013785">
    <property type="entry name" value="Aldolase_TIM"/>
</dbReference>
<dbReference type="InterPro" id="IPR006638">
    <property type="entry name" value="Elp3/MiaA/NifB-like_rSAM"/>
</dbReference>
<dbReference type="InterPro" id="IPR031691">
    <property type="entry name" value="LIAS_N"/>
</dbReference>
<dbReference type="InterPro" id="IPR003698">
    <property type="entry name" value="Lipoyl_synth"/>
</dbReference>
<dbReference type="InterPro" id="IPR007197">
    <property type="entry name" value="rSAM"/>
</dbReference>
<dbReference type="NCBIfam" id="TIGR00510">
    <property type="entry name" value="lipA"/>
    <property type="match status" value="1"/>
</dbReference>
<dbReference type="NCBIfam" id="NF004019">
    <property type="entry name" value="PRK05481.1"/>
    <property type="match status" value="1"/>
</dbReference>
<dbReference type="NCBIfam" id="NF009544">
    <property type="entry name" value="PRK12928.1"/>
    <property type="match status" value="1"/>
</dbReference>
<dbReference type="PANTHER" id="PTHR10949">
    <property type="entry name" value="LIPOYL SYNTHASE"/>
    <property type="match status" value="1"/>
</dbReference>
<dbReference type="PANTHER" id="PTHR10949:SF0">
    <property type="entry name" value="LIPOYL SYNTHASE, MITOCHONDRIAL"/>
    <property type="match status" value="1"/>
</dbReference>
<dbReference type="Pfam" id="PF16881">
    <property type="entry name" value="LIAS_N"/>
    <property type="match status" value="1"/>
</dbReference>
<dbReference type="Pfam" id="PF04055">
    <property type="entry name" value="Radical_SAM"/>
    <property type="match status" value="1"/>
</dbReference>
<dbReference type="PIRSF" id="PIRSF005963">
    <property type="entry name" value="Lipoyl_synth"/>
    <property type="match status" value="1"/>
</dbReference>
<dbReference type="SFLD" id="SFLDF00271">
    <property type="entry name" value="lipoyl_synthase"/>
    <property type="match status" value="1"/>
</dbReference>
<dbReference type="SFLD" id="SFLDS00029">
    <property type="entry name" value="Radical_SAM"/>
    <property type="match status" value="1"/>
</dbReference>
<dbReference type="SMART" id="SM00729">
    <property type="entry name" value="Elp3"/>
    <property type="match status" value="1"/>
</dbReference>
<dbReference type="SUPFAM" id="SSF102114">
    <property type="entry name" value="Radical SAM enzymes"/>
    <property type="match status" value="1"/>
</dbReference>
<dbReference type="PROSITE" id="PS51918">
    <property type="entry name" value="RADICAL_SAM"/>
    <property type="match status" value="1"/>
</dbReference>
<comment type="function">
    <text evidence="1">Catalyzes the radical-mediated insertion of two sulfur atoms into the C-6 and C-8 positions of the octanoyl moiety bound to the lipoyl domains of lipoate-dependent enzymes, thereby converting the octanoylated domains into lipoylated derivatives.</text>
</comment>
<comment type="catalytic activity">
    <reaction evidence="1">
        <text>[[Fe-S] cluster scaffold protein carrying a second [4Fe-4S](2+) cluster] + N(6)-octanoyl-L-lysyl-[protein] + 2 oxidized [2Fe-2S]-[ferredoxin] + 2 S-adenosyl-L-methionine + 4 H(+) = [[Fe-S] cluster scaffold protein] + N(6)-[(R)-dihydrolipoyl]-L-lysyl-[protein] + 4 Fe(3+) + 2 hydrogen sulfide + 2 5'-deoxyadenosine + 2 L-methionine + 2 reduced [2Fe-2S]-[ferredoxin]</text>
        <dbReference type="Rhea" id="RHEA:16585"/>
        <dbReference type="Rhea" id="RHEA-COMP:9928"/>
        <dbReference type="Rhea" id="RHEA-COMP:10000"/>
        <dbReference type="Rhea" id="RHEA-COMP:10001"/>
        <dbReference type="Rhea" id="RHEA-COMP:10475"/>
        <dbReference type="Rhea" id="RHEA-COMP:14568"/>
        <dbReference type="Rhea" id="RHEA-COMP:14569"/>
        <dbReference type="ChEBI" id="CHEBI:15378"/>
        <dbReference type="ChEBI" id="CHEBI:17319"/>
        <dbReference type="ChEBI" id="CHEBI:29034"/>
        <dbReference type="ChEBI" id="CHEBI:29919"/>
        <dbReference type="ChEBI" id="CHEBI:33722"/>
        <dbReference type="ChEBI" id="CHEBI:33737"/>
        <dbReference type="ChEBI" id="CHEBI:33738"/>
        <dbReference type="ChEBI" id="CHEBI:57844"/>
        <dbReference type="ChEBI" id="CHEBI:59789"/>
        <dbReference type="ChEBI" id="CHEBI:78809"/>
        <dbReference type="ChEBI" id="CHEBI:83100"/>
        <dbReference type="EC" id="2.8.1.8"/>
    </reaction>
</comment>
<comment type="cofactor">
    <cofactor evidence="1">
        <name>[4Fe-4S] cluster</name>
        <dbReference type="ChEBI" id="CHEBI:49883"/>
    </cofactor>
    <text evidence="1">Binds 2 [4Fe-4S] clusters per subunit. One cluster is coordinated with 3 cysteines and an exchangeable S-adenosyl-L-methionine.</text>
</comment>
<comment type="pathway">
    <text evidence="1">Protein modification; protein lipoylation via endogenous pathway; protein N(6)-(lipoyl)lysine from octanoyl-[acyl-carrier-protein].</text>
</comment>
<comment type="subcellular location">
    <subcellularLocation>
        <location evidence="1">Cytoplasm</location>
    </subcellularLocation>
</comment>
<comment type="similarity">
    <text evidence="1">Belongs to the radical SAM superfamily. Lipoyl synthase family.</text>
</comment>
<accession>A5IRA1</accession>